<evidence type="ECO:0000250" key="1"/>
<evidence type="ECO:0000250" key="2">
    <source>
        <dbReference type="UniProtKB" id="A8HN58"/>
    </source>
</evidence>
<evidence type="ECO:0000250" key="3">
    <source>
        <dbReference type="UniProtKB" id="Q9BW83"/>
    </source>
</evidence>
<evidence type="ECO:0000269" key="4">
    <source>
    </source>
</evidence>
<evidence type="ECO:0000269" key="5">
    <source>
    </source>
</evidence>
<evidence type="ECO:0000269" key="6">
    <source>
    </source>
</evidence>
<evidence type="ECO:0000269" key="7">
    <source>
    </source>
</evidence>
<evidence type="ECO:0000269" key="8">
    <source>
    </source>
</evidence>
<evidence type="ECO:0000269" key="9">
    <source>
    </source>
</evidence>
<evidence type="ECO:0000269" key="10">
    <source>
    </source>
</evidence>
<evidence type="ECO:0000305" key="11"/>
<dbReference type="EMBL" id="AK011196">
    <property type="status" value="NOT_ANNOTATED_CDS"/>
    <property type="molecule type" value="mRNA"/>
</dbReference>
<dbReference type="EMBL" id="BC017514">
    <property type="protein sequence ID" value="AAH17514.1"/>
    <property type="molecule type" value="mRNA"/>
</dbReference>
<dbReference type="CCDS" id="CCDS37131.1"/>
<dbReference type="RefSeq" id="NP_080207.1">
    <property type="nucleotide sequence ID" value="NM_025931.3"/>
</dbReference>
<dbReference type="SMR" id="Q9D0P8"/>
<dbReference type="BioGRID" id="211896">
    <property type="interactions" value="3"/>
</dbReference>
<dbReference type="ComplexPortal" id="CPX-5028">
    <property type="entry name" value="Intraflagellar transport complex B"/>
</dbReference>
<dbReference type="FunCoup" id="Q9D0P8">
    <property type="interactions" value="1268"/>
</dbReference>
<dbReference type="IntAct" id="Q9D0P8">
    <property type="interactions" value="7"/>
</dbReference>
<dbReference type="STRING" id="10090.ENSMUSP00000016781"/>
<dbReference type="iPTMnet" id="Q9D0P8"/>
<dbReference type="PhosphoSitePlus" id="Q9D0P8"/>
<dbReference type="SwissPalm" id="Q9D0P8"/>
<dbReference type="PaxDb" id="10090-ENSMUSP00000016781"/>
<dbReference type="PeptideAtlas" id="Q9D0P8"/>
<dbReference type="ProteomicsDB" id="266956"/>
<dbReference type="Pumba" id="Q9D0P8"/>
<dbReference type="Antibodypedia" id="11783">
    <property type="antibodies" value="119 antibodies from 23 providers"/>
</dbReference>
<dbReference type="DNASU" id="67042"/>
<dbReference type="Ensembl" id="ENSMUST00000016781.8">
    <property type="protein sequence ID" value="ENSMUSP00000016781.7"/>
    <property type="gene ID" value="ENSMUSG00000016637.8"/>
</dbReference>
<dbReference type="GeneID" id="67042"/>
<dbReference type="KEGG" id="mmu:67042"/>
<dbReference type="UCSC" id="uc007wor.1">
    <property type="organism name" value="mouse"/>
</dbReference>
<dbReference type="AGR" id="MGI:1914292"/>
<dbReference type="CTD" id="11020"/>
<dbReference type="MGI" id="MGI:1914292">
    <property type="gene designation" value="Ift27"/>
</dbReference>
<dbReference type="VEuPathDB" id="HostDB:ENSMUSG00000016637"/>
<dbReference type="eggNOG" id="KOG0079">
    <property type="taxonomic scope" value="Eukaryota"/>
</dbReference>
<dbReference type="GeneTree" id="ENSGT00870000136549"/>
<dbReference type="HOGENOM" id="CLU_041217_10_6_1"/>
<dbReference type="InParanoid" id="Q9D0P8"/>
<dbReference type="OMA" id="KMWGQPS"/>
<dbReference type="OrthoDB" id="265044at2759"/>
<dbReference type="PhylomeDB" id="Q9D0P8"/>
<dbReference type="TreeFam" id="TF329292"/>
<dbReference type="Reactome" id="R-MMU-5620924">
    <property type="pathway name" value="Intraflagellar transport"/>
</dbReference>
<dbReference type="BioGRID-ORCS" id="67042">
    <property type="hits" value="4 hits in 78 CRISPR screens"/>
</dbReference>
<dbReference type="ChiTaRS" id="Ift27">
    <property type="organism name" value="mouse"/>
</dbReference>
<dbReference type="PRO" id="PR:Q9D0P8"/>
<dbReference type="Proteomes" id="UP000000589">
    <property type="component" value="Chromosome 15"/>
</dbReference>
<dbReference type="RNAct" id="Q9D0P8">
    <property type="molecule type" value="protein"/>
</dbReference>
<dbReference type="Bgee" id="ENSMUSG00000016637">
    <property type="expression patterns" value="Expressed in urogenital fold and 254 other cell types or tissues"/>
</dbReference>
<dbReference type="ExpressionAtlas" id="Q9D0P8">
    <property type="expression patterns" value="baseline and differential"/>
</dbReference>
<dbReference type="GO" id="GO:0005813">
    <property type="term" value="C:centrosome"/>
    <property type="evidence" value="ECO:0000314"/>
    <property type="project" value="MGI"/>
</dbReference>
<dbReference type="GO" id="GO:0005929">
    <property type="term" value="C:cilium"/>
    <property type="evidence" value="ECO:0000314"/>
    <property type="project" value="MGI"/>
</dbReference>
<dbReference type="GO" id="GO:0005737">
    <property type="term" value="C:cytoplasm"/>
    <property type="evidence" value="ECO:0000314"/>
    <property type="project" value="UniProtKB"/>
</dbReference>
<dbReference type="GO" id="GO:0030992">
    <property type="term" value="C:intraciliary transport particle B"/>
    <property type="evidence" value="ECO:0000314"/>
    <property type="project" value="UniProtKB"/>
</dbReference>
<dbReference type="GO" id="GO:0005634">
    <property type="term" value="C:nucleus"/>
    <property type="evidence" value="ECO:0000314"/>
    <property type="project" value="MGI"/>
</dbReference>
<dbReference type="GO" id="GO:0036126">
    <property type="term" value="C:sperm flagellum"/>
    <property type="evidence" value="ECO:0000314"/>
    <property type="project" value="UniProtKB"/>
</dbReference>
<dbReference type="GO" id="GO:0097225">
    <property type="term" value="C:sperm midpiece"/>
    <property type="evidence" value="ECO:0000314"/>
    <property type="project" value="MGI"/>
</dbReference>
<dbReference type="GO" id="GO:0097228">
    <property type="term" value="C:sperm principal piece"/>
    <property type="evidence" value="ECO:0000314"/>
    <property type="project" value="MGI"/>
</dbReference>
<dbReference type="GO" id="GO:0005525">
    <property type="term" value="F:GTP binding"/>
    <property type="evidence" value="ECO:0007669"/>
    <property type="project" value="UniProtKB-KW"/>
</dbReference>
<dbReference type="GO" id="GO:0003924">
    <property type="term" value="F:GTPase activity"/>
    <property type="evidence" value="ECO:0007669"/>
    <property type="project" value="InterPro"/>
</dbReference>
<dbReference type="GO" id="GO:0060271">
    <property type="term" value="P:cilium assembly"/>
    <property type="evidence" value="ECO:0000303"/>
    <property type="project" value="ComplexPortal"/>
</dbReference>
<dbReference type="GO" id="GO:0090102">
    <property type="term" value="P:cochlea development"/>
    <property type="evidence" value="ECO:0000315"/>
    <property type="project" value="MGI"/>
</dbReference>
<dbReference type="GO" id="GO:0060122">
    <property type="term" value="P:inner ear receptor cell stereocilium organization"/>
    <property type="evidence" value="ECO:0000315"/>
    <property type="project" value="MGI"/>
</dbReference>
<dbReference type="GO" id="GO:0006886">
    <property type="term" value="P:intracellular protein transport"/>
    <property type="evidence" value="ECO:0000315"/>
    <property type="project" value="UniProtKB"/>
</dbReference>
<dbReference type="GO" id="GO:0035720">
    <property type="term" value="P:intraciliary anterograde transport"/>
    <property type="evidence" value="ECO:0000303"/>
    <property type="project" value="ComplexPortal"/>
</dbReference>
<dbReference type="GO" id="GO:0042073">
    <property type="term" value="P:intraciliary transport"/>
    <property type="evidence" value="ECO:0000315"/>
    <property type="project" value="UniProtKB"/>
</dbReference>
<dbReference type="GO" id="GO:0001822">
    <property type="term" value="P:kidney development"/>
    <property type="evidence" value="ECO:0000315"/>
    <property type="project" value="UniProtKB"/>
</dbReference>
<dbReference type="GO" id="GO:0007224">
    <property type="term" value="P:smoothened signaling pathway"/>
    <property type="evidence" value="ECO:0000315"/>
    <property type="project" value="UniProtKB"/>
</dbReference>
<dbReference type="GO" id="GO:0007283">
    <property type="term" value="P:spermatogenesis"/>
    <property type="evidence" value="ECO:0000315"/>
    <property type="project" value="UniProtKB"/>
</dbReference>
<dbReference type="FunFam" id="3.40.50.300:FF:001095">
    <property type="entry name" value="Intraflagellar transport protein 27 homolog"/>
    <property type="match status" value="1"/>
</dbReference>
<dbReference type="Gene3D" id="3.40.50.300">
    <property type="entry name" value="P-loop containing nucleotide triphosphate hydrolases"/>
    <property type="match status" value="1"/>
</dbReference>
<dbReference type="InterPro" id="IPR027417">
    <property type="entry name" value="P-loop_NTPase"/>
</dbReference>
<dbReference type="InterPro" id="IPR050209">
    <property type="entry name" value="Rab_GTPases_membrane_traffic"/>
</dbReference>
<dbReference type="InterPro" id="IPR005225">
    <property type="entry name" value="Small_GTP-bd"/>
</dbReference>
<dbReference type="InterPro" id="IPR001806">
    <property type="entry name" value="Small_GTPase"/>
</dbReference>
<dbReference type="NCBIfam" id="TIGR00231">
    <property type="entry name" value="small_GTP"/>
    <property type="match status" value="1"/>
</dbReference>
<dbReference type="PANTHER" id="PTHR47979">
    <property type="entry name" value="DRAB11-RELATED"/>
    <property type="match status" value="1"/>
</dbReference>
<dbReference type="Pfam" id="PF00071">
    <property type="entry name" value="Ras"/>
    <property type="match status" value="1"/>
</dbReference>
<dbReference type="PRINTS" id="PR00449">
    <property type="entry name" value="RASTRNSFRMNG"/>
</dbReference>
<dbReference type="SMART" id="SM00175">
    <property type="entry name" value="RAB"/>
    <property type="match status" value="1"/>
</dbReference>
<dbReference type="SMART" id="SM00173">
    <property type="entry name" value="RAS"/>
    <property type="match status" value="1"/>
</dbReference>
<dbReference type="SMART" id="SM00174">
    <property type="entry name" value="RHO"/>
    <property type="match status" value="1"/>
</dbReference>
<dbReference type="SUPFAM" id="SSF52540">
    <property type="entry name" value="P-loop containing nucleoside triphosphate hydrolases"/>
    <property type="match status" value="1"/>
</dbReference>
<dbReference type="PROSITE" id="PS51419">
    <property type="entry name" value="RAB"/>
    <property type="match status" value="1"/>
</dbReference>
<proteinExistence type="evidence at protein level"/>
<organism>
    <name type="scientific">Mus musculus</name>
    <name type="common">Mouse</name>
    <dbReference type="NCBI Taxonomy" id="10090"/>
    <lineage>
        <taxon>Eukaryota</taxon>
        <taxon>Metazoa</taxon>
        <taxon>Chordata</taxon>
        <taxon>Craniata</taxon>
        <taxon>Vertebrata</taxon>
        <taxon>Euteleostomi</taxon>
        <taxon>Mammalia</taxon>
        <taxon>Eutheria</taxon>
        <taxon>Euarchontoglires</taxon>
        <taxon>Glires</taxon>
        <taxon>Rodentia</taxon>
        <taxon>Myomorpha</taxon>
        <taxon>Muroidea</taxon>
        <taxon>Muridae</taxon>
        <taxon>Murinae</taxon>
        <taxon>Mus</taxon>
        <taxon>Mus</taxon>
    </lineage>
</organism>
<feature type="chain" id="PRO_0000082716" description="Intraflagellar transport protein 27 homolog">
    <location>
        <begin position="1"/>
        <end position="186"/>
    </location>
</feature>
<feature type="binding site" evidence="1">
    <location>
        <begin position="12"/>
        <end position="19"/>
    </location>
    <ligand>
        <name>GTP</name>
        <dbReference type="ChEBI" id="CHEBI:37565"/>
    </ligand>
</feature>
<feature type="binding site" evidence="1">
    <location>
        <begin position="64"/>
        <end position="68"/>
    </location>
    <ligand>
        <name>GTP</name>
        <dbReference type="ChEBI" id="CHEBI:37565"/>
    </ligand>
</feature>
<feature type="binding site" evidence="1">
    <location>
        <begin position="123"/>
        <end position="126"/>
    </location>
    <ligand>
        <name>GTP</name>
        <dbReference type="ChEBI" id="CHEBI:37565"/>
    </ligand>
</feature>
<sequence length="186" mass="20814">MVKLAAKCILAGDPAVGKTALVQMFRSDGTHFQKNYTLTTGVDLVVKTVPVLDTNDSVELFIFDSAGKELFSEMLDKLWENPNVLCLVYDVTNEQSFISCTKWLEKVRSQTSGISLPGVLVGTKTDLAGRQTVDSAQAQVWALSQGLEFFETSVKEMDNYEAPFHCLAKQFYQLYREKVDIFHTLV</sequence>
<protein>
    <recommendedName>
        <fullName>Intraflagellar transport protein 27 homolog</fullName>
    </recommendedName>
    <alternativeName>
        <fullName>Putative GTP-binding protein RAY-like</fullName>
    </alternativeName>
    <alternativeName>
        <fullName>Rab-like protein 4</fullName>
    </alternativeName>
</protein>
<name>IFT27_MOUSE</name>
<reference key="1">
    <citation type="journal article" date="2005" name="Science">
        <title>The transcriptional landscape of the mammalian genome.</title>
        <authorList>
            <person name="Carninci P."/>
            <person name="Kasukawa T."/>
            <person name="Katayama S."/>
            <person name="Gough J."/>
            <person name="Frith M.C."/>
            <person name="Maeda N."/>
            <person name="Oyama R."/>
            <person name="Ravasi T."/>
            <person name="Lenhard B."/>
            <person name="Wells C."/>
            <person name="Kodzius R."/>
            <person name="Shimokawa K."/>
            <person name="Bajic V.B."/>
            <person name="Brenner S.E."/>
            <person name="Batalov S."/>
            <person name="Forrest A.R."/>
            <person name="Zavolan M."/>
            <person name="Davis M.J."/>
            <person name="Wilming L.G."/>
            <person name="Aidinis V."/>
            <person name="Allen J.E."/>
            <person name="Ambesi-Impiombato A."/>
            <person name="Apweiler R."/>
            <person name="Aturaliya R.N."/>
            <person name="Bailey T.L."/>
            <person name="Bansal M."/>
            <person name="Baxter L."/>
            <person name="Beisel K.W."/>
            <person name="Bersano T."/>
            <person name="Bono H."/>
            <person name="Chalk A.M."/>
            <person name="Chiu K.P."/>
            <person name="Choudhary V."/>
            <person name="Christoffels A."/>
            <person name="Clutterbuck D.R."/>
            <person name="Crowe M.L."/>
            <person name="Dalla E."/>
            <person name="Dalrymple B.P."/>
            <person name="de Bono B."/>
            <person name="Della Gatta G."/>
            <person name="di Bernardo D."/>
            <person name="Down T."/>
            <person name="Engstrom P."/>
            <person name="Fagiolini M."/>
            <person name="Faulkner G."/>
            <person name="Fletcher C.F."/>
            <person name="Fukushima T."/>
            <person name="Furuno M."/>
            <person name="Futaki S."/>
            <person name="Gariboldi M."/>
            <person name="Georgii-Hemming P."/>
            <person name="Gingeras T.R."/>
            <person name="Gojobori T."/>
            <person name="Green R.E."/>
            <person name="Gustincich S."/>
            <person name="Harbers M."/>
            <person name="Hayashi Y."/>
            <person name="Hensch T.K."/>
            <person name="Hirokawa N."/>
            <person name="Hill D."/>
            <person name="Huminiecki L."/>
            <person name="Iacono M."/>
            <person name="Ikeo K."/>
            <person name="Iwama A."/>
            <person name="Ishikawa T."/>
            <person name="Jakt M."/>
            <person name="Kanapin A."/>
            <person name="Katoh M."/>
            <person name="Kawasawa Y."/>
            <person name="Kelso J."/>
            <person name="Kitamura H."/>
            <person name="Kitano H."/>
            <person name="Kollias G."/>
            <person name="Krishnan S.P."/>
            <person name="Kruger A."/>
            <person name="Kummerfeld S.K."/>
            <person name="Kurochkin I.V."/>
            <person name="Lareau L.F."/>
            <person name="Lazarevic D."/>
            <person name="Lipovich L."/>
            <person name="Liu J."/>
            <person name="Liuni S."/>
            <person name="McWilliam S."/>
            <person name="Madan Babu M."/>
            <person name="Madera M."/>
            <person name="Marchionni L."/>
            <person name="Matsuda H."/>
            <person name="Matsuzawa S."/>
            <person name="Miki H."/>
            <person name="Mignone F."/>
            <person name="Miyake S."/>
            <person name="Morris K."/>
            <person name="Mottagui-Tabar S."/>
            <person name="Mulder N."/>
            <person name="Nakano N."/>
            <person name="Nakauchi H."/>
            <person name="Ng P."/>
            <person name="Nilsson R."/>
            <person name="Nishiguchi S."/>
            <person name="Nishikawa S."/>
            <person name="Nori F."/>
            <person name="Ohara O."/>
            <person name="Okazaki Y."/>
            <person name="Orlando V."/>
            <person name="Pang K.C."/>
            <person name="Pavan W.J."/>
            <person name="Pavesi G."/>
            <person name="Pesole G."/>
            <person name="Petrovsky N."/>
            <person name="Piazza S."/>
            <person name="Reed J."/>
            <person name="Reid J.F."/>
            <person name="Ring B.Z."/>
            <person name="Ringwald M."/>
            <person name="Rost B."/>
            <person name="Ruan Y."/>
            <person name="Salzberg S.L."/>
            <person name="Sandelin A."/>
            <person name="Schneider C."/>
            <person name="Schoenbach C."/>
            <person name="Sekiguchi K."/>
            <person name="Semple C.A."/>
            <person name="Seno S."/>
            <person name="Sessa L."/>
            <person name="Sheng Y."/>
            <person name="Shibata Y."/>
            <person name="Shimada H."/>
            <person name="Shimada K."/>
            <person name="Silva D."/>
            <person name="Sinclair B."/>
            <person name="Sperling S."/>
            <person name="Stupka E."/>
            <person name="Sugiura K."/>
            <person name="Sultana R."/>
            <person name="Takenaka Y."/>
            <person name="Taki K."/>
            <person name="Tammoja K."/>
            <person name="Tan S.L."/>
            <person name="Tang S."/>
            <person name="Taylor M.S."/>
            <person name="Tegner J."/>
            <person name="Teichmann S.A."/>
            <person name="Ueda H.R."/>
            <person name="van Nimwegen E."/>
            <person name="Verardo R."/>
            <person name="Wei C.L."/>
            <person name="Yagi K."/>
            <person name="Yamanishi H."/>
            <person name="Zabarovsky E."/>
            <person name="Zhu S."/>
            <person name="Zimmer A."/>
            <person name="Hide W."/>
            <person name="Bult C."/>
            <person name="Grimmond S.M."/>
            <person name="Teasdale R.D."/>
            <person name="Liu E.T."/>
            <person name="Brusic V."/>
            <person name="Quackenbush J."/>
            <person name="Wahlestedt C."/>
            <person name="Mattick J.S."/>
            <person name="Hume D.A."/>
            <person name="Kai C."/>
            <person name="Sasaki D."/>
            <person name="Tomaru Y."/>
            <person name="Fukuda S."/>
            <person name="Kanamori-Katayama M."/>
            <person name="Suzuki M."/>
            <person name="Aoki J."/>
            <person name="Arakawa T."/>
            <person name="Iida J."/>
            <person name="Imamura K."/>
            <person name="Itoh M."/>
            <person name="Kato T."/>
            <person name="Kawaji H."/>
            <person name="Kawagashira N."/>
            <person name="Kawashima T."/>
            <person name="Kojima M."/>
            <person name="Kondo S."/>
            <person name="Konno H."/>
            <person name="Nakano K."/>
            <person name="Ninomiya N."/>
            <person name="Nishio T."/>
            <person name="Okada M."/>
            <person name="Plessy C."/>
            <person name="Shibata K."/>
            <person name="Shiraki T."/>
            <person name="Suzuki S."/>
            <person name="Tagami M."/>
            <person name="Waki K."/>
            <person name="Watahiki A."/>
            <person name="Okamura-Oho Y."/>
            <person name="Suzuki H."/>
            <person name="Kawai J."/>
            <person name="Hayashizaki Y."/>
        </authorList>
    </citation>
    <scope>NUCLEOTIDE SEQUENCE [LARGE SCALE MRNA]</scope>
    <source>
        <strain>C57BL/6J</strain>
        <tissue>Embryo</tissue>
    </source>
</reference>
<reference key="2">
    <citation type="journal article" date="2004" name="Genome Res.">
        <title>The status, quality, and expansion of the NIH full-length cDNA project: the Mammalian Gene Collection (MGC).</title>
        <authorList>
            <consortium name="The MGC Project Team"/>
        </authorList>
    </citation>
    <scope>NUCLEOTIDE SEQUENCE [LARGE SCALE MRNA]</scope>
    <source>
        <strain>C57BL/6J</strain>
        <tissue>Retina</tissue>
    </source>
</reference>
<reference key="3">
    <citation type="journal article" date="2009" name="Cell Motil. Cytoskeleton">
        <title>Characterization of mouse IFT complex B.</title>
        <authorList>
            <person name="Follit J.A."/>
            <person name="Xu F."/>
            <person name="Keady B.T."/>
            <person name="Pazour G.J."/>
        </authorList>
    </citation>
    <scope>IDENTIFICATION IN THE IFT COMPLEX B</scope>
    <scope>SUBCELLULAR LOCATION</scope>
    <scope>INTERACTION WITH ITF88</scope>
</reference>
<reference key="4">
    <citation type="journal article" date="2010" name="Cell">
        <title>A tissue-specific atlas of mouse protein phosphorylation and expression.</title>
        <authorList>
            <person name="Huttlin E.L."/>
            <person name="Jedrychowski M.P."/>
            <person name="Elias J.E."/>
            <person name="Goswami T."/>
            <person name="Rad R."/>
            <person name="Beausoleil S.A."/>
            <person name="Villen J."/>
            <person name="Haas W."/>
            <person name="Sowa M.E."/>
            <person name="Gygi S.P."/>
        </authorList>
    </citation>
    <scope>IDENTIFICATION BY MASS SPECTROMETRY [LARGE SCALE ANALYSIS]</scope>
    <source>
        <tissue>Testis</tissue>
    </source>
</reference>
<reference key="5">
    <citation type="journal article" date="2012" name="PLoS Genet.">
        <title>RAB-like 2 has an essential role in male fertility, sperm intra-flagellar transport, and tail assembly.</title>
        <authorList>
            <person name="Lo J.C."/>
            <person name="Jamsai D."/>
            <person name="O'Connor A.E."/>
            <person name="Borg C."/>
            <person name="Clark B.J."/>
            <person name="Whisstock J.C."/>
            <person name="Field M.C."/>
            <person name="Adams V."/>
            <person name="Ishikawa T."/>
            <person name="Aitken R.J."/>
            <person name="Whittle B."/>
            <person name="Goodnow C.C."/>
            <person name="Ormandy C.J."/>
            <person name="O'Bryan M.K."/>
        </authorList>
    </citation>
    <scope>INTERACTION WITH RABL2</scope>
    <scope>TISSUE SPECIFICITY</scope>
</reference>
<reference key="6">
    <citation type="journal article" date="2013" name="Exp. Cell Res.">
        <title>Interaction of mouse TTC30/DYF-1 with multiple intraflagellar transport complex B proteins and KIF17.</title>
        <authorList>
            <person name="Howard P.W."/>
            <person name="Jue S.F."/>
            <person name="Maurer R.A."/>
        </authorList>
    </citation>
    <scope>INTERACTION WITH IFT70B</scope>
</reference>
<reference key="7">
    <citation type="journal article" date="2014" name="Dev. Cell">
        <title>IFT27 links the BBSome to IFT for maintenance of the ciliary signaling compartment.</title>
        <authorList>
            <person name="Eguether T."/>
            <person name="San Agustin G.T."/>
            <person name="Keady B.T."/>
            <person name="Jonassen J.A."/>
            <person name="Liang Y."/>
            <person name="Francis R."/>
            <person name="Tobita K."/>
            <person name="Johnson C.A."/>
            <person name="Abdelhamed Z.A."/>
            <person name="Lo C.W."/>
            <person name="Pazour G.J."/>
        </authorList>
    </citation>
    <scope>FUNCTION</scope>
    <scope>DISRUPTION PHENOTYPE</scope>
</reference>
<reference key="8">
    <citation type="journal article" date="2017" name="Biol. Reprod.">
        <title>IFT25, an intraflagellar transporter protein dispensable for ciliogenesis in somatic cells, is essential for sperm flagella formation.</title>
        <authorList>
            <person name="Liu H."/>
            <person name="Li W."/>
            <person name="Zhang Y."/>
            <person name="Zhang Z."/>
            <person name="Shang X."/>
            <person name="Zhang L."/>
            <person name="Zhang S."/>
            <person name="Li Y."/>
            <person name="Somoza A.V."/>
            <person name="Delpi B."/>
            <person name="Gerton G.L."/>
            <person name="Foster J.A."/>
            <person name="Hess R.A."/>
            <person name="Pazour G.J."/>
            <person name="Zhang Z."/>
        </authorList>
    </citation>
    <scope>INTERACTION WITH IFT25</scope>
</reference>
<reference key="9">
    <citation type="journal article" date="2017" name="Dev. Biol.">
        <title>Intraflagellar transporter protein (IFT27), an IFT25 binding partner, is essential for male fertility and spermiogenesis in mice.</title>
        <authorList>
            <person name="Zhang Y."/>
            <person name="Liu H."/>
            <person name="Li W."/>
            <person name="Zhang Z."/>
            <person name="Shang X."/>
            <person name="Zhang D."/>
            <person name="Li Y."/>
            <person name="Zhang S."/>
            <person name="Liu J."/>
            <person name="Hess R.A."/>
            <person name="Pazour G.J."/>
            <person name="Zhang Z."/>
        </authorList>
    </citation>
    <scope>FUNCTION</scope>
    <scope>DISRUPTION PHENOTYPE</scope>
    <scope>SUBCELLULAR LOCATION</scope>
    <scope>TISSUE SPECIFICITY</scope>
</reference>
<reference key="10">
    <citation type="journal article" date="2018" name="Mech. Dev.">
        <title>Ift25 is not a cystic kidney disease gene but is required for early steps of kidney development.</title>
        <authorList>
            <person name="Desai P.B."/>
            <person name="San Agustin J.T."/>
            <person name="Stuck M.W."/>
            <person name="Jonassen J.A."/>
            <person name="Bates C.M."/>
            <person name="Pazour G.J."/>
        </authorList>
    </citation>
    <scope>FUNCTION</scope>
    <scope>DISRUPTION PHENOTYPE</scope>
</reference>
<gene>
    <name type="primary">Ift27</name>
    <name type="synonym">Rabl4</name>
    <name type="synonym">Rayl</name>
</gene>
<accession>Q9D0P8</accession>
<comment type="function">
    <text evidence="2 7 9 10">Small GTPase-like component of the intraflagellar transport (IFT) complex B that promotes the exit of the BBSome complex from cilia via its interaction with ARL6 (PubMed:25446516). Not involved in entry of the BBSome complex into cilium. Prevents aggregation of GTP-free ARL6. Required for hedgehog signaling (PubMed:25446516). Forms a subcomplex within the IFT complex B with IFT25 (By similarity). Its role in intraflagellar transport is mainly seen in tissues rich in ciliated cells such as kidney and testis. Essential for male fertility, spermiogenesis and sperm flagella formation (PubMed:28964737). Plays a role in the early development of the kidney (PubMed:29626631). May be involved in the regulation of ureteric bud initiation (PubMed:29626631).</text>
</comment>
<comment type="subunit">
    <text evidence="3 4 5 6 8">Component of the IFT complex B, at least composed of IFT20, IFT22, IFT25, IFT27, IFT46, IFT52, TRAF3IP1/IFT54, IFT57, IFT74, IFT80, IFT81, and IFT88 (PubMed:19253336). Interacts with IFT25 (PubMed:28430876). Interacts with IFT70B (PubMed:23810713). Interacts with RABL2/RABL2A; binding is equal in the presence of GTP or GDP (PubMed:23055941). Interacts with IFT88 (PubMed:19253336). Interacts with ARL6; recognizes and binds with the GTP-free form of ARL6 (By similarity).</text>
</comment>
<comment type="subcellular location">
    <subcellularLocation>
        <location evidence="4">Cell projection</location>
        <location evidence="4">Cilium</location>
    </subcellularLocation>
    <subcellularLocation>
        <location evidence="9">Cytoplasm</location>
    </subcellularLocation>
    <subcellularLocation>
        <location evidence="9">Cell projection</location>
        <location evidence="9">Cilium</location>
        <location evidence="9">Flagellum</location>
    </subcellularLocation>
    <text evidence="9">Localizes to the sperm flagellum.</text>
</comment>
<comment type="tissue specificity">
    <text evidence="5 9">Expressed predominantly in the testis (at protein level) (PubMed:28964737). Co-localizes with RABL2/RABL2A in the midpiece of elongated spermatids within the testis (at protein level).</text>
</comment>
<comment type="disruption phenotype">
    <text evidence="7 9 10">Null mutants retain the ability to ciliate and survive through gestation. They die shortly after birth due to different phenotypes reminiscent of Shh signaling defects: polydactyly, lung isomerisms, and structural heart defects (PubMed:25446516). Conditional knockout in male germ cells results in infertility, abnormal sperm morphology, significantly reduced sperm count and sperm mobility (PubMed:28964737). Mutant mice with germline deletion of IFT27 die shortly after birth with structural defects in most organs including the kidneys, where duplicated collecting duct system and/or duplex kidney is often observed. Conditional deletion in the collecting duct results in smaller kidneys that develop only mild tubule dilation with age whereas conditional deletion from the peri-Wolffian duct stroma results in duplex kidneys (PubMed:29626631).</text>
</comment>
<comment type="similarity">
    <text evidence="11">Belongs to the small GTPase superfamily. Rab family.</text>
</comment>
<keyword id="KW-0966">Cell projection</keyword>
<keyword id="KW-0969">Cilium</keyword>
<keyword id="KW-0963">Cytoplasm</keyword>
<keyword id="KW-0221">Differentiation</keyword>
<keyword id="KW-0282">Flagellum</keyword>
<keyword id="KW-0342">GTP-binding</keyword>
<keyword id="KW-0547">Nucleotide-binding</keyword>
<keyword id="KW-0653">Protein transport</keyword>
<keyword id="KW-1185">Reference proteome</keyword>
<keyword id="KW-0744">Spermatogenesis</keyword>
<keyword id="KW-0813">Transport</keyword>